<keyword id="KW-0031">Aminopeptidase</keyword>
<keyword id="KW-0963">Cytoplasm</keyword>
<keyword id="KW-0378">Hydrolase</keyword>
<keyword id="KW-0479">Metal-binding</keyword>
<keyword id="KW-0482">Metalloprotease</keyword>
<keyword id="KW-0645">Protease</keyword>
<keyword id="KW-1185">Reference proteome</keyword>
<keyword id="KW-0862">Zinc</keyword>
<organism>
    <name type="scientific">Clostridium acetobutylicum (strain ATCC 824 / DSM 792 / JCM 1419 / IAM 19013 / LMG 5710 / NBRC 13948 / NRRL B-527 / VKM B-1787 / 2291 / W)</name>
    <dbReference type="NCBI Taxonomy" id="272562"/>
    <lineage>
        <taxon>Bacteria</taxon>
        <taxon>Bacillati</taxon>
        <taxon>Bacillota</taxon>
        <taxon>Clostridia</taxon>
        <taxon>Eubacteriales</taxon>
        <taxon>Clostridiaceae</taxon>
        <taxon>Clostridium</taxon>
    </lineage>
</organism>
<protein>
    <recommendedName>
        <fullName evidence="1">Peptidase T</fullName>
        <ecNumber evidence="1">3.4.11.4</ecNumber>
    </recommendedName>
    <alternativeName>
        <fullName evidence="1">Aminotripeptidase</fullName>
        <shortName evidence="1">Tripeptidase</shortName>
    </alternativeName>
    <alternativeName>
        <fullName evidence="1">Tripeptide aminopeptidase</fullName>
    </alternativeName>
</protein>
<comment type="function">
    <text evidence="1">Cleaves the N-terminal amino acid of tripeptides.</text>
</comment>
<comment type="catalytic activity">
    <reaction evidence="1">
        <text>Release of the N-terminal residue from a tripeptide.</text>
        <dbReference type="EC" id="3.4.11.4"/>
    </reaction>
</comment>
<comment type="cofactor">
    <cofactor evidence="1">
        <name>Zn(2+)</name>
        <dbReference type="ChEBI" id="CHEBI:29105"/>
    </cofactor>
    <text evidence="1">Binds 2 Zn(2+) ions per subunit.</text>
</comment>
<comment type="subcellular location">
    <subcellularLocation>
        <location evidence="1">Cytoplasm</location>
    </subcellularLocation>
</comment>
<comment type="similarity">
    <text evidence="1">Belongs to the peptidase M20B family.</text>
</comment>
<evidence type="ECO:0000255" key="1">
    <source>
        <dbReference type="HAMAP-Rule" id="MF_00550"/>
    </source>
</evidence>
<name>PEPT_CLOAB</name>
<proteinExistence type="inferred from homology"/>
<feature type="chain" id="PRO_0000185288" description="Peptidase T">
    <location>
        <begin position="1"/>
        <end position="408"/>
    </location>
</feature>
<feature type="active site" evidence="1">
    <location>
        <position position="80"/>
    </location>
</feature>
<feature type="active site" description="Proton acceptor" evidence="1">
    <location>
        <position position="175"/>
    </location>
</feature>
<feature type="binding site" evidence="1">
    <location>
        <position position="78"/>
    </location>
    <ligand>
        <name>Zn(2+)</name>
        <dbReference type="ChEBI" id="CHEBI:29105"/>
        <label>1</label>
    </ligand>
</feature>
<feature type="binding site" evidence="1">
    <location>
        <position position="141"/>
    </location>
    <ligand>
        <name>Zn(2+)</name>
        <dbReference type="ChEBI" id="CHEBI:29105"/>
        <label>1</label>
    </ligand>
</feature>
<feature type="binding site" evidence="1">
    <location>
        <position position="141"/>
    </location>
    <ligand>
        <name>Zn(2+)</name>
        <dbReference type="ChEBI" id="CHEBI:29105"/>
        <label>2</label>
    </ligand>
</feature>
<feature type="binding site" evidence="1">
    <location>
        <position position="176"/>
    </location>
    <ligand>
        <name>Zn(2+)</name>
        <dbReference type="ChEBI" id="CHEBI:29105"/>
        <label>2</label>
    </ligand>
</feature>
<feature type="binding site" evidence="1">
    <location>
        <position position="198"/>
    </location>
    <ligand>
        <name>Zn(2+)</name>
        <dbReference type="ChEBI" id="CHEBI:29105"/>
        <label>1</label>
    </ligand>
</feature>
<feature type="binding site" evidence="1">
    <location>
        <position position="380"/>
    </location>
    <ligand>
        <name>Zn(2+)</name>
        <dbReference type="ChEBI" id="CHEBI:29105"/>
        <label>2</label>
    </ligand>
</feature>
<accession>Q97LS8</accession>
<sequence length="408" mass="45871">MEEVIERFLKYVKFDTQSDENSNTVPSTDKQLKLGKNLVEELKEIGLSGVSIDDNGYVMAYLPANIEKNVPALGFISHMDTSPDMSGENVNPQFVKNYDGNDIVLNKDKNIVLSPKDFPEILKYKGKTLITTDGNTLLGADDKAGIAEIITAISYISKHPEIKHGKICIGFTPDEEVGRGADYFDVKKFGADVAYTVDGGDFGELEYENFNAASAKITVHGRNVHPGSAKDKMINSISVAEEFMRLMPKEQAPEYTEGYEGFYHIVDFQGSVEETKLQYIIRDFSKNKFEDKKKLMLDAAKFINEKYGRNLVEIEVKDQYYNMKEKIDEVKYVVDIAYKAMEEVEVKPLVRPIRGGTDGARLSFMGLPTPNLFTGGVNFHGKFEYIPTFAMEKAVEVIVKIVELYAEK</sequence>
<gene>
    <name evidence="1" type="primary">pepT</name>
    <name type="ordered locus">CA_C0476</name>
</gene>
<dbReference type="EC" id="3.4.11.4" evidence="1"/>
<dbReference type="EMBL" id="AE001437">
    <property type="protein sequence ID" value="AAK78456.1"/>
    <property type="molecule type" value="Genomic_DNA"/>
</dbReference>
<dbReference type="PIR" id="E96958">
    <property type="entry name" value="E96958"/>
</dbReference>
<dbReference type="RefSeq" id="NP_347116.1">
    <property type="nucleotide sequence ID" value="NC_003030.1"/>
</dbReference>
<dbReference type="RefSeq" id="WP_010963798.1">
    <property type="nucleotide sequence ID" value="NC_003030.1"/>
</dbReference>
<dbReference type="SMR" id="Q97LS8"/>
<dbReference type="STRING" id="272562.CA_C0476"/>
<dbReference type="MEROPS" id="M20.003"/>
<dbReference type="GeneID" id="44996985"/>
<dbReference type="KEGG" id="cac:CA_C0476"/>
<dbReference type="PATRIC" id="fig|272562.8.peg.675"/>
<dbReference type="eggNOG" id="COG2195">
    <property type="taxonomic scope" value="Bacteria"/>
</dbReference>
<dbReference type="HOGENOM" id="CLU_053676_0_0_9"/>
<dbReference type="OrthoDB" id="9804934at2"/>
<dbReference type="Proteomes" id="UP000000814">
    <property type="component" value="Chromosome"/>
</dbReference>
<dbReference type="GO" id="GO:0005829">
    <property type="term" value="C:cytosol"/>
    <property type="evidence" value="ECO:0007669"/>
    <property type="project" value="TreeGrafter"/>
</dbReference>
<dbReference type="GO" id="GO:0008237">
    <property type="term" value="F:metallopeptidase activity"/>
    <property type="evidence" value="ECO:0007669"/>
    <property type="project" value="UniProtKB-KW"/>
</dbReference>
<dbReference type="GO" id="GO:0045148">
    <property type="term" value="F:tripeptide aminopeptidase activity"/>
    <property type="evidence" value="ECO:0007669"/>
    <property type="project" value="UniProtKB-UniRule"/>
</dbReference>
<dbReference type="GO" id="GO:0008270">
    <property type="term" value="F:zinc ion binding"/>
    <property type="evidence" value="ECO:0007669"/>
    <property type="project" value="UniProtKB-UniRule"/>
</dbReference>
<dbReference type="GO" id="GO:0043171">
    <property type="term" value="P:peptide catabolic process"/>
    <property type="evidence" value="ECO:0007669"/>
    <property type="project" value="UniProtKB-UniRule"/>
</dbReference>
<dbReference type="GO" id="GO:0006508">
    <property type="term" value="P:proteolysis"/>
    <property type="evidence" value="ECO:0007669"/>
    <property type="project" value="UniProtKB-UniRule"/>
</dbReference>
<dbReference type="CDD" id="cd03892">
    <property type="entry name" value="M20_peptT"/>
    <property type="match status" value="1"/>
</dbReference>
<dbReference type="FunFam" id="3.30.70.360:FF:000002">
    <property type="entry name" value="Peptidase T"/>
    <property type="match status" value="1"/>
</dbReference>
<dbReference type="Gene3D" id="3.30.70.360">
    <property type="match status" value="1"/>
</dbReference>
<dbReference type="Gene3D" id="3.40.630.10">
    <property type="entry name" value="Zn peptidases"/>
    <property type="match status" value="1"/>
</dbReference>
<dbReference type="HAMAP" id="MF_00550">
    <property type="entry name" value="Aminopeptidase_M20"/>
    <property type="match status" value="1"/>
</dbReference>
<dbReference type="InterPro" id="IPR001261">
    <property type="entry name" value="ArgE/DapE_CS"/>
</dbReference>
<dbReference type="InterPro" id="IPR036264">
    <property type="entry name" value="Bact_exopeptidase_dim_dom"/>
</dbReference>
<dbReference type="InterPro" id="IPR002933">
    <property type="entry name" value="Peptidase_M20"/>
</dbReference>
<dbReference type="InterPro" id="IPR011650">
    <property type="entry name" value="Peptidase_M20_dimer"/>
</dbReference>
<dbReference type="InterPro" id="IPR010161">
    <property type="entry name" value="Peptidase_M20B"/>
</dbReference>
<dbReference type="NCBIfam" id="TIGR01882">
    <property type="entry name" value="peptidase-T"/>
    <property type="match status" value="1"/>
</dbReference>
<dbReference type="NCBIfam" id="NF003976">
    <property type="entry name" value="PRK05469.1"/>
    <property type="match status" value="1"/>
</dbReference>
<dbReference type="NCBIfam" id="NF009920">
    <property type="entry name" value="PRK13381.1"/>
    <property type="match status" value="1"/>
</dbReference>
<dbReference type="PANTHER" id="PTHR42994">
    <property type="entry name" value="PEPTIDASE T"/>
    <property type="match status" value="1"/>
</dbReference>
<dbReference type="PANTHER" id="PTHR42994:SF1">
    <property type="entry name" value="PEPTIDASE T"/>
    <property type="match status" value="1"/>
</dbReference>
<dbReference type="Pfam" id="PF07687">
    <property type="entry name" value="M20_dimer"/>
    <property type="match status" value="1"/>
</dbReference>
<dbReference type="Pfam" id="PF01546">
    <property type="entry name" value="Peptidase_M20"/>
    <property type="match status" value="1"/>
</dbReference>
<dbReference type="PIRSF" id="PIRSF037215">
    <property type="entry name" value="Peptidase_M20B"/>
    <property type="match status" value="1"/>
</dbReference>
<dbReference type="SUPFAM" id="SSF55031">
    <property type="entry name" value="Bacterial exopeptidase dimerisation domain"/>
    <property type="match status" value="1"/>
</dbReference>
<dbReference type="SUPFAM" id="SSF53187">
    <property type="entry name" value="Zn-dependent exopeptidases"/>
    <property type="match status" value="1"/>
</dbReference>
<dbReference type="PROSITE" id="PS00758">
    <property type="entry name" value="ARGE_DAPE_CPG2_1"/>
    <property type="match status" value="1"/>
</dbReference>
<dbReference type="PROSITE" id="PS00759">
    <property type="entry name" value="ARGE_DAPE_CPG2_2"/>
    <property type="match status" value="1"/>
</dbReference>
<reference key="1">
    <citation type="journal article" date="2001" name="J. Bacteriol.">
        <title>Genome sequence and comparative analysis of the solvent-producing bacterium Clostridium acetobutylicum.</title>
        <authorList>
            <person name="Noelling J."/>
            <person name="Breton G."/>
            <person name="Omelchenko M.V."/>
            <person name="Makarova K.S."/>
            <person name="Zeng Q."/>
            <person name="Gibson R."/>
            <person name="Lee H.M."/>
            <person name="Dubois J."/>
            <person name="Qiu D."/>
            <person name="Hitti J."/>
            <person name="Wolf Y.I."/>
            <person name="Tatusov R.L."/>
            <person name="Sabathe F."/>
            <person name="Doucette-Stamm L.A."/>
            <person name="Soucaille P."/>
            <person name="Daly M.J."/>
            <person name="Bennett G.N."/>
            <person name="Koonin E.V."/>
            <person name="Smith D.R."/>
        </authorList>
    </citation>
    <scope>NUCLEOTIDE SEQUENCE [LARGE SCALE GENOMIC DNA]</scope>
    <source>
        <strain>ATCC 824 / DSM 792 / JCM 1419 / IAM 19013 / LMG 5710 / NBRC 13948 / NRRL B-527 / VKM B-1787 / 2291 / W</strain>
    </source>
</reference>